<organism>
    <name type="scientific">Saccharomyces cerevisiae (strain ATCC 204508 / S288c)</name>
    <name type="common">Baker's yeast</name>
    <dbReference type="NCBI Taxonomy" id="559292"/>
    <lineage>
        <taxon>Eukaryota</taxon>
        <taxon>Fungi</taxon>
        <taxon>Dikarya</taxon>
        <taxon>Ascomycota</taxon>
        <taxon>Saccharomycotina</taxon>
        <taxon>Saccharomycetes</taxon>
        <taxon>Saccharomycetales</taxon>
        <taxon>Saccharomycetaceae</taxon>
        <taxon>Saccharomyces</taxon>
    </lineage>
</organism>
<feature type="chain" id="PRO_0000071129" description="Pre-mRNA-splicing factor CWC23">
    <location>
        <begin position="1"/>
        <end position="283"/>
    </location>
</feature>
<feature type="domain" description="J" evidence="1">
    <location>
        <begin position="15"/>
        <end position="87"/>
    </location>
</feature>
<feature type="helix" evidence="8">
    <location>
        <begin position="16"/>
        <end position="19"/>
    </location>
</feature>
<feature type="helix" evidence="8">
    <location>
        <begin position="35"/>
        <end position="49"/>
    </location>
</feature>
<feature type="turn" evidence="8">
    <location>
        <begin position="51"/>
        <end position="53"/>
    </location>
</feature>
<feature type="helix" evidence="8">
    <location>
        <begin position="63"/>
        <end position="74"/>
    </location>
</feature>
<feature type="helix" evidence="8">
    <location>
        <begin position="79"/>
        <end position="85"/>
    </location>
</feature>
<feature type="helix" evidence="8">
    <location>
        <begin position="93"/>
        <end position="113"/>
    </location>
</feature>
<feature type="helix" evidence="8">
    <location>
        <begin position="123"/>
        <end position="139"/>
    </location>
</feature>
<reference key="1">
    <citation type="journal article" date="1996" name="Yeast">
        <title>Sequence analysis of a 10 kb DNA fragment from yeast chromosome VII reveals a novel member of the DnaJ family.</title>
        <authorList>
            <person name="Rodriguez-Belmonte E."/>
            <person name="Rodriguez Torres A.M."/>
            <person name="Tizon B."/>
            <person name="Cadahia J.L."/>
            <person name="Gonzalez-Siso I."/>
            <person name="Ramil E."/>
            <person name="Becerra M."/>
            <person name="Gonzalez-Dominguez M."/>
            <person name="Cerdan E."/>
        </authorList>
    </citation>
    <scope>NUCLEOTIDE SEQUENCE [LARGE SCALE GENOMIC DNA]</scope>
</reference>
<reference key="2">
    <citation type="journal article" date="2014" name="G3 (Bethesda)">
        <title>The reference genome sequence of Saccharomyces cerevisiae: Then and now.</title>
        <authorList>
            <person name="Engel S.R."/>
            <person name="Dietrich F.S."/>
            <person name="Fisk D.G."/>
            <person name="Binkley G."/>
            <person name="Balakrishnan R."/>
            <person name="Costanzo M.C."/>
            <person name="Dwight S.S."/>
            <person name="Hitz B.C."/>
            <person name="Karra K."/>
            <person name="Nash R.S."/>
            <person name="Weng S."/>
            <person name="Wong E.D."/>
            <person name="Lloyd P."/>
            <person name="Skrzypek M.S."/>
            <person name="Miyasato S.R."/>
            <person name="Simison M."/>
            <person name="Cherry J.M."/>
        </authorList>
    </citation>
    <scope>GENOME REANNOTATION</scope>
    <source>
        <strain>ATCC 204508 / S288c</strain>
    </source>
</reference>
<reference key="3">
    <citation type="journal article" date="1997" name="Nature">
        <title>The nucleotide sequence of Saccharomyces cerevisiae chromosome VII.</title>
        <authorList>
            <person name="Tettelin H."/>
            <person name="Agostoni-Carbone M.L."/>
            <person name="Albermann K."/>
            <person name="Albers M."/>
            <person name="Arroyo J."/>
            <person name="Backes U."/>
            <person name="Barreiros T."/>
            <person name="Bertani I."/>
            <person name="Bjourson A.J."/>
            <person name="Brueckner M."/>
            <person name="Bruschi C.V."/>
            <person name="Carignani G."/>
            <person name="Castagnoli L."/>
            <person name="Cerdan E."/>
            <person name="Clemente M.L."/>
            <person name="Coblenz A."/>
            <person name="Coglievina M."/>
            <person name="Coissac E."/>
            <person name="Defoor E."/>
            <person name="Del Bino S."/>
            <person name="Delius H."/>
            <person name="Delneri D."/>
            <person name="de Wergifosse P."/>
            <person name="Dujon B."/>
            <person name="Durand P."/>
            <person name="Entian K.-D."/>
            <person name="Eraso P."/>
            <person name="Escribano V."/>
            <person name="Fabiani L."/>
            <person name="Fartmann B."/>
            <person name="Feroli F."/>
            <person name="Feuermann M."/>
            <person name="Frontali L."/>
            <person name="Garcia-Gonzalez M."/>
            <person name="Garcia-Saez M.I."/>
            <person name="Goffeau A."/>
            <person name="Guerreiro P."/>
            <person name="Hani J."/>
            <person name="Hansen M."/>
            <person name="Hebling U."/>
            <person name="Hernandez K."/>
            <person name="Heumann K."/>
            <person name="Hilger F."/>
            <person name="Hofmann B."/>
            <person name="Indge K.J."/>
            <person name="James C.M."/>
            <person name="Klima R."/>
            <person name="Koetter P."/>
            <person name="Kramer B."/>
            <person name="Kramer W."/>
            <person name="Lauquin G."/>
            <person name="Leuther H."/>
            <person name="Louis E.J."/>
            <person name="Maillier E."/>
            <person name="Marconi A."/>
            <person name="Martegani E."/>
            <person name="Mazon M.J."/>
            <person name="Mazzoni C."/>
            <person name="McReynolds A.D.K."/>
            <person name="Melchioretto P."/>
            <person name="Mewes H.-W."/>
            <person name="Minenkova O."/>
            <person name="Mueller-Auer S."/>
            <person name="Nawrocki A."/>
            <person name="Netter P."/>
            <person name="Neu R."/>
            <person name="Nombela C."/>
            <person name="Oliver S.G."/>
            <person name="Panzeri L."/>
            <person name="Paoluzi S."/>
            <person name="Plevani P."/>
            <person name="Portetelle D."/>
            <person name="Portillo F."/>
            <person name="Potier S."/>
            <person name="Purnelle B."/>
            <person name="Rieger M."/>
            <person name="Riles L."/>
            <person name="Rinaldi T."/>
            <person name="Robben J."/>
            <person name="Rodrigues-Pousada C."/>
            <person name="Rodriguez-Belmonte E."/>
            <person name="Rodriguez-Torres A.M."/>
            <person name="Rose M."/>
            <person name="Ruzzi M."/>
            <person name="Saliola M."/>
            <person name="Sanchez-Perez M."/>
            <person name="Schaefer B."/>
            <person name="Schaefer M."/>
            <person name="Scharfe M."/>
            <person name="Schmidheini T."/>
            <person name="Schreer A."/>
            <person name="Skala J."/>
            <person name="Souciet J.-L."/>
            <person name="Steensma H.Y."/>
            <person name="Talla E."/>
            <person name="Thierry A."/>
            <person name="Vandenbol M."/>
            <person name="van der Aart Q.J.M."/>
            <person name="Van Dyck L."/>
            <person name="Vanoni M."/>
            <person name="Verhasselt P."/>
            <person name="Voet M."/>
            <person name="Volckaert G."/>
            <person name="Wambutt R."/>
            <person name="Watson M.D."/>
            <person name="Weber N."/>
            <person name="Wedler E."/>
            <person name="Wedler H."/>
            <person name="Wipfli P."/>
            <person name="Wolf K."/>
            <person name="Wright L.F."/>
            <person name="Zaccaria P."/>
            <person name="Zimmermann M."/>
            <person name="Zollner A."/>
            <person name="Kleine K."/>
        </authorList>
    </citation>
    <scope>NUCLEOTIDE SEQUENCE [LARGE SCALE GENOMIC DNA]</scope>
    <source>
        <strain>ATCC 204508 / S288c</strain>
    </source>
</reference>
<reference key="4">
    <citation type="journal article" date="2007" name="Genome Res.">
        <title>Approaching a complete repository of sequence-verified protein-encoding clones for Saccharomyces cerevisiae.</title>
        <authorList>
            <person name="Hu Y."/>
            <person name="Rolfs A."/>
            <person name="Bhullar B."/>
            <person name="Murthy T.V.S."/>
            <person name="Zhu C."/>
            <person name="Berger M.F."/>
            <person name="Camargo A.A."/>
            <person name="Kelley F."/>
            <person name="McCarron S."/>
            <person name="Jepson D."/>
            <person name="Richardson A."/>
            <person name="Raphael J."/>
            <person name="Moreira D."/>
            <person name="Taycher E."/>
            <person name="Zuo D."/>
            <person name="Mohr S."/>
            <person name="Kane M.F."/>
            <person name="Williamson J."/>
            <person name="Simpson A.J.G."/>
            <person name="Bulyk M.L."/>
            <person name="Harlow E."/>
            <person name="Marsischky G."/>
            <person name="Kolodner R.D."/>
            <person name="LaBaer J."/>
        </authorList>
    </citation>
    <scope>NUCLEOTIDE SEQUENCE [GENOMIC DNA]</scope>
    <source>
        <strain>ATCC 204508 / S288c</strain>
    </source>
</reference>
<reference key="5">
    <citation type="journal article" date="1999" name="Yeast">
        <title>Disruption of six novel Saccharomyces cerevisiae genes reveals that YGL129c is necessary for growth in non-fermentable carbon sources, YGL128c for growth at low or high temperatures and YGL125w is implicated in the biosynthesis of methionine.</title>
        <authorList>
            <person name="Tizon B."/>
            <person name="Rodriguez-Torres A.M."/>
            <person name="Cerdan M.E."/>
        </authorList>
    </citation>
    <scope>FUNCTION</scope>
</reference>
<reference key="6">
    <citation type="journal article" date="2002" name="Mol. Cell. Biol.">
        <title>Proteomics analysis reveals stable multiprotein complexes in both fission and budding yeasts containing Myb-related Cdc5p/Cef1p, novel pre-mRNA splicing factors, and snRNAs.</title>
        <authorList>
            <person name="Ohi M.D."/>
            <person name="Link A.J."/>
            <person name="Ren L."/>
            <person name="Jennings J.L."/>
            <person name="McDonald W.H."/>
            <person name="Gould K.L."/>
        </authorList>
    </citation>
    <scope>IDENTIFICATION IN THE CWC COMPLEX</scope>
    <scope>IDENTIFICATION BY MASS SPECTROMETRY</scope>
</reference>
<reference key="7">
    <citation type="journal article" date="2003" name="J. Biol. Chem.">
        <title>Use of modular substrates demonstrates mechanistic diversity and reveals differences in chaperone requirement of ERAD.</title>
        <authorList>
            <person name="Taxis C."/>
            <person name="Hitt R."/>
            <person name="Park S.-H."/>
            <person name="Deak P.M."/>
            <person name="Kostova Z."/>
            <person name="Wolf D.H."/>
        </authorList>
    </citation>
    <scope>FUNCTION</scope>
</reference>
<reference key="8">
    <citation type="journal article" date="2003" name="Mol. Cell">
        <title>Assigning function to yeast proteins by integration of technologies.</title>
        <authorList>
            <person name="Hazbun T.R."/>
            <person name="Malmstroem L."/>
            <person name="Anderson S."/>
            <person name="Graczyk B.J."/>
            <person name="Fox B."/>
            <person name="Riffle M."/>
            <person name="Sundin B.A."/>
            <person name="Aranda J.D."/>
            <person name="McDonald W.H."/>
            <person name="Chiu C.-H."/>
            <person name="Snydsman B.E."/>
            <person name="Bradley P."/>
            <person name="Muller E.G.D."/>
            <person name="Fields S."/>
            <person name="Baker D."/>
            <person name="Yates J.R. III"/>
            <person name="Davis T.N."/>
        </authorList>
    </citation>
    <scope>IDENTIFICATION BY MASS SPECTROMETRY</scope>
</reference>
<reference key="9">
    <citation type="journal article" date="2003" name="Nature">
        <title>Sequencing and comparison of yeast species to identify genes and regulatory elements.</title>
        <authorList>
            <person name="Kellis M."/>
            <person name="Patterson N."/>
            <person name="Endrizzi M."/>
            <person name="Birren B.W."/>
            <person name="Lander E.S."/>
        </authorList>
    </citation>
    <scope>IDENTIFICATION OF PROBABLE INITIATION SITE</scope>
</reference>
<reference key="10">
    <citation type="journal article" date="2003" name="Nature">
        <title>Global analysis of protein localization in budding yeast.</title>
        <authorList>
            <person name="Huh W.-K."/>
            <person name="Falvo J.V."/>
            <person name="Gerke L.C."/>
            <person name="Carroll A.S."/>
            <person name="Howson R.W."/>
            <person name="Weissman J.S."/>
            <person name="O'Shea E.K."/>
        </authorList>
    </citation>
    <scope>SUBCELLULAR LOCATION [LARGE SCALE ANALYSIS]</scope>
</reference>
<reference key="11">
    <citation type="journal article" date="2004" name="EMBO Rep.">
        <title>The J-protein family: modulating protein assembly, disassembly and translocation.</title>
        <authorList>
            <person name="Walsh P."/>
            <person name="Bursac D."/>
            <person name="Law Y.C."/>
            <person name="Cyr D."/>
            <person name="Lithgow T."/>
        </authorList>
    </citation>
    <scope>FUNCTION</scope>
</reference>
<reference key="12">
    <citation type="journal article" date="2012" name="Proc. Natl. Acad. Sci. U.S.A.">
        <title>N-terminal acetylome analyses and functional insights of the N-terminal acetyltransferase NatB.</title>
        <authorList>
            <person name="Van Damme P."/>
            <person name="Lasa M."/>
            <person name="Polevoda B."/>
            <person name="Gazquez C."/>
            <person name="Elosegui-Artola A."/>
            <person name="Kim D.S."/>
            <person name="De Juan-Pardo E."/>
            <person name="Demeyer K."/>
            <person name="Hole K."/>
            <person name="Larrea E."/>
            <person name="Timmerman E."/>
            <person name="Prieto J."/>
            <person name="Arnesen T."/>
            <person name="Sherman F."/>
            <person name="Gevaert K."/>
            <person name="Aldabe R."/>
        </authorList>
    </citation>
    <scope>IDENTIFICATION BY MASS SPECTROMETRY [LARGE SCALE ANALYSIS]</scope>
</reference>
<gene>
    <name type="primary">CWC23</name>
    <name type="ordered locus">YGL128C</name>
    <name type="ORF">G2861</name>
</gene>
<protein>
    <recommendedName>
        <fullName>Pre-mRNA-splicing factor CWC23</fullName>
    </recommendedName>
    <alternativeName>
        <fullName>Complexed with CEF1 protein 23</fullName>
    </alternativeName>
</protein>
<dbReference type="EMBL" id="X87252">
    <property type="protein sequence ID" value="CAA60703.1"/>
    <property type="status" value="ALT_INIT"/>
    <property type="molecule type" value="Genomic_DNA"/>
</dbReference>
<dbReference type="EMBL" id="Z72650">
    <property type="protein sequence ID" value="CAA96837.1"/>
    <property type="status" value="ALT_INIT"/>
    <property type="molecule type" value="Genomic_DNA"/>
</dbReference>
<dbReference type="EMBL" id="AY693008">
    <property type="protein sequence ID" value="AAT93027.1"/>
    <property type="status" value="ALT_INIT"/>
    <property type="molecule type" value="Genomic_DNA"/>
</dbReference>
<dbReference type="EMBL" id="BK006941">
    <property type="protein sequence ID" value="DAA07981.1"/>
    <property type="molecule type" value="Genomic_DNA"/>
</dbReference>
<dbReference type="PIR" id="S64139">
    <property type="entry name" value="S64139"/>
</dbReference>
<dbReference type="RefSeq" id="NP_011387.2">
    <property type="nucleotide sequence ID" value="NM_001180993.1"/>
</dbReference>
<dbReference type="PDB" id="5Y88">
    <property type="method" value="EM"/>
    <property type="resolution" value="3.70 A"/>
    <property type="chains" value="T=1-283"/>
</dbReference>
<dbReference type="PDBsum" id="5Y88"/>
<dbReference type="EMDB" id="EMD-6817"/>
<dbReference type="SMR" id="P52868"/>
<dbReference type="BioGRID" id="33123">
    <property type="interactions" value="33"/>
</dbReference>
<dbReference type="ComplexPortal" id="CPX-1651">
    <property type="entry name" value="PRP19-associated complex"/>
</dbReference>
<dbReference type="DIP" id="DIP-6831N"/>
<dbReference type="FunCoup" id="P52868">
    <property type="interactions" value="183"/>
</dbReference>
<dbReference type="IntAct" id="P52868">
    <property type="interactions" value="17"/>
</dbReference>
<dbReference type="MINT" id="P52868"/>
<dbReference type="STRING" id="4932.YGL128C"/>
<dbReference type="iPTMnet" id="P52868"/>
<dbReference type="PaxDb" id="4932-YGL128C"/>
<dbReference type="PeptideAtlas" id="P52868"/>
<dbReference type="TopDownProteomics" id="P52868"/>
<dbReference type="EnsemblFungi" id="YGL128C_mRNA">
    <property type="protein sequence ID" value="YGL128C"/>
    <property type="gene ID" value="YGL128C"/>
</dbReference>
<dbReference type="GeneID" id="852749"/>
<dbReference type="KEGG" id="sce:YGL128C"/>
<dbReference type="AGR" id="SGD:S000003096"/>
<dbReference type="SGD" id="S000003096">
    <property type="gene designation" value="CWC23"/>
</dbReference>
<dbReference type="VEuPathDB" id="FungiDB:YGL128C"/>
<dbReference type="eggNOG" id="KOG0716">
    <property type="taxonomic scope" value="Eukaryota"/>
</dbReference>
<dbReference type="HOGENOM" id="CLU_063717_0_0_1"/>
<dbReference type="InParanoid" id="P52868"/>
<dbReference type="OMA" id="KHFKLPY"/>
<dbReference type="OrthoDB" id="436519at2759"/>
<dbReference type="BioCyc" id="YEAST:G3O-30624-MONOMER"/>
<dbReference type="BioGRID-ORCS" id="852749">
    <property type="hits" value="3 hits in 10 CRISPR screens"/>
</dbReference>
<dbReference type="PRO" id="PR:P52868"/>
<dbReference type="Proteomes" id="UP000002311">
    <property type="component" value="Chromosome VII"/>
</dbReference>
<dbReference type="RNAct" id="P52868">
    <property type="molecule type" value="protein"/>
</dbReference>
<dbReference type="GO" id="GO:0005737">
    <property type="term" value="C:cytoplasm"/>
    <property type="evidence" value="ECO:0007669"/>
    <property type="project" value="UniProtKB-SubCell"/>
</dbReference>
<dbReference type="GO" id="GO:0000974">
    <property type="term" value="C:Prp19 complex"/>
    <property type="evidence" value="ECO:0000353"/>
    <property type="project" value="ComplexPortal"/>
</dbReference>
<dbReference type="GO" id="GO:0005681">
    <property type="term" value="C:spliceosomal complex"/>
    <property type="evidence" value="ECO:0000318"/>
    <property type="project" value="GO_Central"/>
</dbReference>
<dbReference type="GO" id="GO:0005684">
    <property type="term" value="C:U2-type spliceosomal complex"/>
    <property type="evidence" value="ECO:0000314"/>
    <property type="project" value="SGD"/>
</dbReference>
<dbReference type="GO" id="GO:0000398">
    <property type="term" value="P:mRNA splicing, via spliceosome"/>
    <property type="evidence" value="ECO:0000303"/>
    <property type="project" value="ComplexPortal"/>
</dbReference>
<dbReference type="GO" id="GO:0000390">
    <property type="term" value="P:spliceosomal complex disassembly"/>
    <property type="evidence" value="ECO:0000316"/>
    <property type="project" value="SGD"/>
</dbReference>
<dbReference type="CDD" id="cd06257">
    <property type="entry name" value="DnaJ"/>
    <property type="match status" value="1"/>
</dbReference>
<dbReference type="Gene3D" id="1.10.287.110">
    <property type="entry name" value="DnaJ domain"/>
    <property type="match status" value="1"/>
</dbReference>
<dbReference type="InterPro" id="IPR001623">
    <property type="entry name" value="DnaJ_domain"/>
</dbReference>
<dbReference type="InterPro" id="IPR018253">
    <property type="entry name" value="DnaJ_domain_CS"/>
</dbReference>
<dbReference type="InterPro" id="IPR036869">
    <property type="entry name" value="J_dom_sf"/>
</dbReference>
<dbReference type="InterPro" id="IPR052094">
    <property type="entry name" value="Pre-mRNA-splicing_ERAD"/>
</dbReference>
<dbReference type="PANTHER" id="PTHR44313">
    <property type="entry name" value="DNAJ HOMOLOG SUBFAMILY C MEMBER 17"/>
    <property type="match status" value="1"/>
</dbReference>
<dbReference type="PANTHER" id="PTHR44313:SF1">
    <property type="entry name" value="DNAJ HOMOLOG SUBFAMILY C MEMBER 17"/>
    <property type="match status" value="1"/>
</dbReference>
<dbReference type="Pfam" id="PF00226">
    <property type="entry name" value="DnaJ"/>
    <property type="match status" value="1"/>
</dbReference>
<dbReference type="SMART" id="SM00271">
    <property type="entry name" value="DnaJ"/>
    <property type="match status" value="1"/>
</dbReference>
<dbReference type="SUPFAM" id="SSF46565">
    <property type="entry name" value="Chaperone J-domain"/>
    <property type="match status" value="1"/>
</dbReference>
<dbReference type="PROSITE" id="PS00636">
    <property type="entry name" value="DNAJ_1"/>
    <property type="match status" value="1"/>
</dbReference>
<dbReference type="PROSITE" id="PS50076">
    <property type="entry name" value="DNAJ_2"/>
    <property type="match status" value="1"/>
</dbReference>
<accession>P52868</accession>
<accession>D6VU20</accession>
<accession>Q6B1S2</accession>
<name>CWC23_YEAST</name>
<proteinExistence type="evidence at protein level"/>
<comment type="function">
    <text evidence="2 4 6">Involved in pre-mRNA splicing. May be involved in endoplasmic reticulum-associated protein degradation (ERAD) and required for growth at low and high temperatures.</text>
</comment>
<comment type="subunit">
    <text evidence="3">Belongs to the CWC complex (or CEF1-associated complex), a spliceosome sub-complex reminiscent of a late-stage spliceosome composed of the U2, U5 and U6 snRNAs and at least BUD13, BUD31, BRR2, CDC40, CEF1, CLF1, CUS1, CWC2, CWC15, CWC21, CWC22, CWC23, CWC24, CWC25, CWC27, ECM2, HSH155, IST3, ISY1, LEA1, MSL1, NTC20, PRP8, PRP9, PRP11, PRP19, PRP21, PRP22, PRP45, PRP46, SLU7, SMB1, SMD1, SMD2, SMD3, SMX2, SMX3, SNT309, SNU114, SPP2, SYF1, SYF2, RSE1 and YJU2.</text>
</comment>
<comment type="interaction">
    <interactant intactId="EBI-560">
        <id>P52868</id>
    </interactant>
    <interactant intactId="EBI-576">
        <id>Q06411</id>
        <label>SPP382</label>
    </interactant>
    <organismsDiffer>false</organismsDiffer>
    <experiments>7</experiments>
</comment>
<comment type="subcellular location">
    <subcellularLocation>
        <location evidence="5">Cytoplasm</location>
    </subcellularLocation>
    <subcellularLocation>
        <location evidence="5">Nucleus</location>
    </subcellularLocation>
</comment>
<comment type="similarity">
    <text evidence="7">Belongs to the DnaJ family.</text>
</comment>
<comment type="sequence caution" evidence="7">
    <conflict type="erroneous initiation">
        <sequence resource="EMBL-CDS" id="AAT93027"/>
    </conflict>
</comment>
<comment type="sequence caution" evidence="7">
    <conflict type="erroneous initiation">
        <sequence resource="EMBL-CDS" id="CAA60703"/>
    </conflict>
</comment>
<comment type="sequence caution" evidence="7">
    <conflict type="erroneous initiation">
        <sequence resource="EMBL-CDS" id="CAA96837"/>
    </conflict>
</comment>
<evidence type="ECO:0000255" key="1">
    <source>
        <dbReference type="PROSITE-ProRule" id="PRU00286"/>
    </source>
</evidence>
<evidence type="ECO:0000269" key="2">
    <source>
    </source>
</evidence>
<evidence type="ECO:0000269" key="3">
    <source>
    </source>
</evidence>
<evidence type="ECO:0000269" key="4">
    <source>
    </source>
</evidence>
<evidence type="ECO:0000269" key="5">
    <source>
    </source>
</evidence>
<evidence type="ECO:0000269" key="6">
    <source>
    </source>
</evidence>
<evidence type="ECO:0000305" key="7"/>
<evidence type="ECO:0007829" key="8">
    <source>
        <dbReference type="PDB" id="5Y88"/>
    </source>
</evidence>
<keyword id="KW-0002">3D-structure</keyword>
<keyword id="KW-0143">Chaperone</keyword>
<keyword id="KW-0963">Cytoplasm</keyword>
<keyword id="KW-0507">mRNA processing</keyword>
<keyword id="KW-0508">mRNA splicing</keyword>
<keyword id="KW-0539">Nucleus</keyword>
<keyword id="KW-1185">Reference proteome</keyword>
<keyword id="KW-0747">Spliceosome</keyword>
<sequence length="283" mass="33237">MPGHELEDVINQRLNLYDVLELPTPLDVHTIYDDLPQIKRKYRTLALKYHPDKHPDNPSIIHKFHLLSTATNILTNADVRPHYDRWLIEFLRKTNDIERNKLIQKLEESESSTIPTTTPHPDLLQIQRHGELLRKLKHFNLPYGDWKHLNTQDQENASQHPYYDCSTLRIVLDNFLQSNNKSNCLSHLRNQVFITLSANEIYDIYFSERNNYSKDDSIIIYTVFDTPITAQHVFRNWSSGNLIPTVKDISPLIPLHYYSDFNLETELNDDIARLVSNEPILLD</sequence>